<reference key="1">
    <citation type="journal article" date="2002" name="J. Neurosci.">
        <title>Identification of an axotomy-induced glycosylated protein, AIGP1, possibly involved in cell death triggered by endoplasmic reticulum-Golgi stress.</title>
        <authorList>
            <person name="Aoki S."/>
            <person name="Su Q."/>
            <person name="Li H."/>
            <person name="Nishikawa K."/>
            <person name="Ayukawa K."/>
            <person name="Hara Y."/>
            <person name="Namikawa K."/>
            <person name="Kiryu-Seo S."/>
            <person name="Kiyama H."/>
            <person name="Wada K."/>
        </authorList>
    </citation>
    <scope>NUCLEOTIDE SEQUENCE [MRNA]</scope>
    <source>
        <tissue>Brain</tissue>
    </source>
</reference>
<reference key="2">
    <citation type="journal article" date="2005" name="Science">
        <title>The transcriptional landscape of the mammalian genome.</title>
        <authorList>
            <person name="Carninci P."/>
            <person name="Kasukawa T."/>
            <person name="Katayama S."/>
            <person name="Gough J."/>
            <person name="Frith M.C."/>
            <person name="Maeda N."/>
            <person name="Oyama R."/>
            <person name="Ravasi T."/>
            <person name="Lenhard B."/>
            <person name="Wells C."/>
            <person name="Kodzius R."/>
            <person name="Shimokawa K."/>
            <person name="Bajic V.B."/>
            <person name="Brenner S.E."/>
            <person name="Batalov S."/>
            <person name="Forrest A.R."/>
            <person name="Zavolan M."/>
            <person name="Davis M.J."/>
            <person name="Wilming L.G."/>
            <person name="Aidinis V."/>
            <person name="Allen J.E."/>
            <person name="Ambesi-Impiombato A."/>
            <person name="Apweiler R."/>
            <person name="Aturaliya R.N."/>
            <person name="Bailey T.L."/>
            <person name="Bansal M."/>
            <person name="Baxter L."/>
            <person name="Beisel K.W."/>
            <person name="Bersano T."/>
            <person name="Bono H."/>
            <person name="Chalk A.M."/>
            <person name="Chiu K.P."/>
            <person name="Choudhary V."/>
            <person name="Christoffels A."/>
            <person name="Clutterbuck D.R."/>
            <person name="Crowe M.L."/>
            <person name="Dalla E."/>
            <person name="Dalrymple B.P."/>
            <person name="de Bono B."/>
            <person name="Della Gatta G."/>
            <person name="di Bernardo D."/>
            <person name="Down T."/>
            <person name="Engstrom P."/>
            <person name="Fagiolini M."/>
            <person name="Faulkner G."/>
            <person name="Fletcher C.F."/>
            <person name="Fukushima T."/>
            <person name="Furuno M."/>
            <person name="Futaki S."/>
            <person name="Gariboldi M."/>
            <person name="Georgii-Hemming P."/>
            <person name="Gingeras T.R."/>
            <person name="Gojobori T."/>
            <person name="Green R.E."/>
            <person name="Gustincich S."/>
            <person name="Harbers M."/>
            <person name="Hayashi Y."/>
            <person name="Hensch T.K."/>
            <person name="Hirokawa N."/>
            <person name="Hill D."/>
            <person name="Huminiecki L."/>
            <person name="Iacono M."/>
            <person name="Ikeo K."/>
            <person name="Iwama A."/>
            <person name="Ishikawa T."/>
            <person name="Jakt M."/>
            <person name="Kanapin A."/>
            <person name="Katoh M."/>
            <person name="Kawasawa Y."/>
            <person name="Kelso J."/>
            <person name="Kitamura H."/>
            <person name="Kitano H."/>
            <person name="Kollias G."/>
            <person name="Krishnan S.P."/>
            <person name="Kruger A."/>
            <person name="Kummerfeld S.K."/>
            <person name="Kurochkin I.V."/>
            <person name="Lareau L.F."/>
            <person name="Lazarevic D."/>
            <person name="Lipovich L."/>
            <person name="Liu J."/>
            <person name="Liuni S."/>
            <person name="McWilliam S."/>
            <person name="Madan Babu M."/>
            <person name="Madera M."/>
            <person name="Marchionni L."/>
            <person name="Matsuda H."/>
            <person name="Matsuzawa S."/>
            <person name="Miki H."/>
            <person name="Mignone F."/>
            <person name="Miyake S."/>
            <person name="Morris K."/>
            <person name="Mottagui-Tabar S."/>
            <person name="Mulder N."/>
            <person name="Nakano N."/>
            <person name="Nakauchi H."/>
            <person name="Ng P."/>
            <person name="Nilsson R."/>
            <person name="Nishiguchi S."/>
            <person name="Nishikawa S."/>
            <person name="Nori F."/>
            <person name="Ohara O."/>
            <person name="Okazaki Y."/>
            <person name="Orlando V."/>
            <person name="Pang K.C."/>
            <person name="Pavan W.J."/>
            <person name="Pavesi G."/>
            <person name="Pesole G."/>
            <person name="Petrovsky N."/>
            <person name="Piazza S."/>
            <person name="Reed J."/>
            <person name="Reid J.F."/>
            <person name="Ring B.Z."/>
            <person name="Ringwald M."/>
            <person name="Rost B."/>
            <person name="Ruan Y."/>
            <person name="Salzberg S.L."/>
            <person name="Sandelin A."/>
            <person name="Schneider C."/>
            <person name="Schoenbach C."/>
            <person name="Sekiguchi K."/>
            <person name="Semple C.A."/>
            <person name="Seno S."/>
            <person name="Sessa L."/>
            <person name="Sheng Y."/>
            <person name="Shibata Y."/>
            <person name="Shimada H."/>
            <person name="Shimada K."/>
            <person name="Silva D."/>
            <person name="Sinclair B."/>
            <person name="Sperling S."/>
            <person name="Stupka E."/>
            <person name="Sugiura K."/>
            <person name="Sultana R."/>
            <person name="Takenaka Y."/>
            <person name="Taki K."/>
            <person name="Tammoja K."/>
            <person name="Tan S.L."/>
            <person name="Tang S."/>
            <person name="Taylor M.S."/>
            <person name="Tegner J."/>
            <person name="Teichmann S.A."/>
            <person name="Ueda H.R."/>
            <person name="van Nimwegen E."/>
            <person name="Verardo R."/>
            <person name="Wei C.L."/>
            <person name="Yagi K."/>
            <person name="Yamanishi H."/>
            <person name="Zabarovsky E."/>
            <person name="Zhu S."/>
            <person name="Zimmer A."/>
            <person name="Hide W."/>
            <person name="Bult C."/>
            <person name="Grimmond S.M."/>
            <person name="Teasdale R.D."/>
            <person name="Liu E.T."/>
            <person name="Brusic V."/>
            <person name="Quackenbush J."/>
            <person name="Wahlestedt C."/>
            <person name="Mattick J.S."/>
            <person name="Hume D.A."/>
            <person name="Kai C."/>
            <person name="Sasaki D."/>
            <person name="Tomaru Y."/>
            <person name="Fukuda S."/>
            <person name="Kanamori-Katayama M."/>
            <person name="Suzuki M."/>
            <person name="Aoki J."/>
            <person name="Arakawa T."/>
            <person name="Iida J."/>
            <person name="Imamura K."/>
            <person name="Itoh M."/>
            <person name="Kato T."/>
            <person name="Kawaji H."/>
            <person name="Kawagashira N."/>
            <person name="Kawashima T."/>
            <person name="Kojima M."/>
            <person name="Kondo S."/>
            <person name="Konno H."/>
            <person name="Nakano K."/>
            <person name="Ninomiya N."/>
            <person name="Nishio T."/>
            <person name="Okada M."/>
            <person name="Plessy C."/>
            <person name="Shibata K."/>
            <person name="Shiraki T."/>
            <person name="Suzuki S."/>
            <person name="Tagami M."/>
            <person name="Waki K."/>
            <person name="Watahiki A."/>
            <person name="Okamura-Oho Y."/>
            <person name="Suzuki H."/>
            <person name="Kawai J."/>
            <person name="Hayashizaki Y."/>
        </authorList>
    </citation>
    <scope>NUCLEOTIDE SEQUENCE [LARGE SCALE MRNA]</scope>
    <source>
        <strain>C57BL/6J</strain>
        <tissue>Diencephalon</tissue>
        <tissue>Ovary</tissue>
        <tissue>Spleen</tissue>
        <tissue>Thymus</tissue>
    </source>
</reference>
<reference key="3">
    <citation type="journal article" date="2004" name="Genome Res.">
        <title>The status, quality, and expansion of the NIH full-length cDNA project: the Mammalian Gene Collection (MGC).</title>
        <authorList>
            <consortium name="The MGC Project Team"/>
        </authorList>
    </citation>
    <scope>NUCLEOTIDE SEQUENCE [LARGE SCALE MRNA]</scope>
    <source>
        <tissue>Limb</tissue>
        <tissue>Olfactory epithelium</tissue>
    </source>
</reference>
<proteinExistence type="evidence at transcript level"/>
<accession>Q8BHJ6</accession>
<accession>Q80ZH8</accession>
<accession>Q8CHM0</accession>
<sequence length="461" mass="51831">MSARCCAGQLACCCGSAGCSLCCGCCPKFRQSRTTRFMYLFYFILVIALCCVMMTPSVMKQVKDHIPFFEEFCKKTQAGGDACENLVGYSAVYRVCFGMACFFALFCLLTLKVNNSKSCRAYIHNGFWFFKLLLLGAMCSGAFFIPDQETFLKVWRYVGAGGSFLFICIQLLLIVQFAHKWNKNWTAGTVRNKLWYASLSLVTLIMYSVAVGGLALMAVFYTQWDDCMDNKILLGVHGGLCVLISLVAISPCVQNRQPHSGLLQSGLISCYVTYLTFSALTSKPEKKVLDEHGKNVTICAPDFGQDLHRDENMVTWLGTLLLIVCISYSCLTSTTRSSSDALQSRYGAPELEVARCCFCFGPDGEDTEEQQNVKKGPRVIYDEKKGTVYSYSYFHFVFFLASLYVMMTLTSWFHYENATIKTFFSGWSVFWVKMASCWMCVLLYLQTLVAPLCCPSRQFSV</sequence>
<comment type="function">
    <text evidence="1 2">Restriction factor required to restrict infectivity of gammaretroviruses: acts by inhibiting an early step of viral infection. Impairs the penetration of the viral particle into the cytoplasm. Non-ATP-dependent, non-specific lipid transporter for phosphatidylserine, phosphatidylcholine, and phosphatidylethanolamine. Functions as a scramblase that flips lipids in both directions across the membrane. Phospholipid scrambling results in gammaretroviral surface exposure of phosphatidylserine and loss of membrane asymmetry, which leads to loss of infectivity (By similarity). Enhances the incorporation of serine into phosphatidylserine and sphingolipids. May play a role in providing serine molecules for the formation of myelin glycosphingolipids in oligodendrocytes (By similarity).</text>
</comment>
<comment type="catalytic activity">
    <reaction evidence="2">
        <text>a 1,2-diacyl-sn-glycero-3-phospho-L-serine(in) = a 1,2-diacyl-sn-glycero-3-phospho-L-serine(out)</text>
        <dbReference type="Rhea" id="RHEA:38663"/>
        <dbReference type="ChEBI" id="CHEBI:57262"/>
    </reaction>
</comment>
<comment type="catalytic activity">
    <reaction evidence="2">
        <text>a 1,2-diacyl-sn-glycero-3-phosphocholine(in) = a 1,2-diacyl-sn-glycero-3-phosphocholine(out)</text>
        <dbReference type="Rhea" id="RHEA:38571"/>
        <dbReference type="ChEBI" id="CHEBI:57643"/>
    </reaction>
</comment>
<comment type="catalytic activity">
    <reaction evidence="2">
        <text>a 1,2-diacyl-sn-glycero-3-phosphoethanolamine(in) = a 1,2-diacyl-sn-glycero-3-phosphoethanolamine(out)</text>
        <dbReference type="Rhea" id="RHEA:38895"/>
        <dbReference type="ChEBI" id="CHEBI:64612"/>
    </reaction>
</comment>
<comment type="subcellular location">
    <subcellularLocation>
        <location evidence="2">Cell membrane</location>
        <topology evidence="3">Multi-pass membrane protein</topology>
    </subcellularLocation>
    <text evidence="2">Localizes to the cell membrane, where it is efficiently incorporated into budding gammaretrovirus virions and impairs subsequent virion penetration of susceptible target cells.</text>
</comment>
<comment type="similarity">
    <text evidence="5">Belongs to the TDE1 family.</text>
</comment>
<evidence type="ECO:0000250" key="1">
    <source>
        <dbReference type="UniProtKB" id="Q63175"/>
    </source>
</evidence>
<evidence type="ECO:0000250" key="2">
    <source>
        <dbReference type="UniProtKB" id="Q86VE9"/>
    </source>
</evidence>
<evidence type="ECO:0000255" key="3"/>
<evidence type="ECO:0000303" key="4">
    <source>
    </source>
</evidence>
<evidence type="ECO:0000305" key="5"/>
<name>SERC5_MOUSE</name>
<gene>
    <name type="primary">Serinc5</name>
    <name evidence="4" type="synonym">Aigp3</name>
</gene>
<organism>
    <name type="scientific">Mus musculus</name>
    <name type="common">Mouse</name>
    <dbReference type="NCBI Taxonomy" id="10090"/>
    <lineage>
        <taxon>Eukaryota</taxon>
        <taxon>Metazoa</taxon>
        <taxon>Chordata</taxon>
        <taxon>Craniata</taxon>
        <taxon>Vertebrata</taxon>
        <taxon>Euteleostomi</taxon>
        <taxon>Mammalia</taxon>
        <taxon>Eutheria</taxon>
        <taxon>Euarchontoglires</taxon>
        <taxon>Glires</taxon>
        <taxon>Rodentia</taxon>
        <taxon>Myomorpha</taxon>
        <taxon>Muroidea</taxon>
        <taxon>Muridae</taxon>
        <taxon>Murinae</taxon>
        <taxon>Mus</taxon>
        <taxon>Mus</taxon>
    </lineage>
</organism>
<dbReference type="EMBL" id="AB029501">
    <property type="protein sequence ID" value="BAC44829.1"/>
    <property type="molecule type" value="mRNA"/>
</dbReference>
<dbReference type="EMBL" id="AK037699">
    <property type="protein sequence ID" value="BAC29851.1"/>
    <property type="molecule type" value="mRNA"/>
</dbReference>
<dbReference type="EMBL" id="AK054475">
    <property type="protein sequence ID" value="BAC35794.1"/>
    <property type="molecule type" value="mRNA"/>
</dbReference>
<dbReference type="EMBL" id="AK136799">
    <property type="protein sequence ID" value="BAE23132.1"/>
    <property type="molecule type" value="mRNA"/>
</dbReference>
<dbReference type="EMBL" id="AK165334">
    <property type="protein sequence ID" value="BAE38139.1"/>
    <property type="molecule type" value="mRNA"/>
</dbReference>
<dbReference type="EMBL" id="BC049189">
    <property type="protein sequence ID" value="AAH49189.2"/>
    <property type="molecule type" value="mRNA"/>
</dbReference>
<dbReference type="EMBL" id="BC062131">
    <property type="protein sequence ID" value="AAH62131.1"/>
    <property type="molecule type" value="mRNA"/>
</dbReference>
<dbReference type="CCDS" id="CCDS36744.1"/>
<dbReference type="RefSeq" id="NP_766176.1">
    <property type="nucleotide sequence ID" value="NM_172588.2"/>
</dbReference>
<dbReference type="SMR" id="Q8BHJ6"/>
<dbReference type="FunCoup" id="Q8BHJ6">
    <property type="interactions" value="1337"/>
</dbReference>
<dbReference type="STRING" id="10090.ENSMUSP00000047547"/>
<dbReference type="GlyCosmos" id="Q8BHJ6">
    <property type="glycosylation" value="2 sites, No reported glycans"/>
</dbReference>
<dbReference type="GlyGen" id="Q8BHJ6">
    <property type="glycosylation" value="3 sites, 2 N-linked glycans (2 sites)"/>
</dbReference>
<dbReference type="iPTMnet" id="Q8BHJ6"/>
<dbReference type="PhosphoSitePlus" id="Q8BHJ6"/>
<dbReference type="SwissPalm" id="Q8BHJ6"/>
<dbReference type="PaxDb" id="10090-ENSMUSP00000047547"/>
<dbReference type="PeptideAtlas" id="Q8BHJ6"/>
<dbReference type="ProteomicsDB" id="261321"/>
<dbReference type="Antibodypedia" id="49006">
    <property type="antibodies" value="23 antibodies from 9 providers"/>
</dbReference>
<dbReference type="DNASU" id="218442"/>
<dbReference type="Ensembl" id="ENSMUST00000049488.9">
    <property type="protein sequence ID" value="ENSMUSP00000047547.8"/>
    <property type="gene ID" value="ENSMUSG00000021703.10"/>
</dbReference>
<dbReference type="GeneID" id="218442"/>
<dbReference type="KEGG" id="mmu:218442"/>
<dbReference type="UCSC" id="uc007rkt.1">
    <property type="organism name" value="mouse"/>
</dbReference>
<dbReference type="AGR" id="MGI:2444223"/>
<dbReference type="CTD" id="256987"/>
<dbReference type="MGI" id="MGI:2444223">
    <property type="gene designation" value="Serinc5"/>
</dbReference>
<dbReference type="VEuPathDB" id="HostDB:ENSMUSG00000021703"/>
<dbReference type="eggNOG" id="KOG2592">
    <property type="taxonomic scope" value="Eukaryota"/>
</dbReference>
<dbReference type="GeneTree" id="ENSGT01030000234623"/>
<dbReference type="HOGENOM" id="CLU_029574_5_2_1"/>
<dbReference type="InParanoid" id="Q8BHJ6"/>
<dbReference type="OMA" id="GCTFNKI"/>
<dbReference type="OrthoDB" id="5963193at2759"/>
<dbReference type="PhylomeDB" id="Q8BHJ6"/>
<dbReference type="TreeFam" id="TF312881"/>
<dbReference type="Reactome" id="R-MMU-977347">
    <property type="pathway name" value="Serine biosynthesis"/>
</dbReference>
<dbReference type="BioGRID-ORCS" id="218442">
    <property type="hits" value="2 hits in 78 CRISPR screens"/>
</dbReference>
<dbReference type="ChiTaRS" id="Serinc5">
    <property type="organism name" value="mouse"/>
</dbReference>
<dbReference type="PRO" id="PR:Q8BHJ6"/>
<dbReference type="Proteomes" id="UP000000589">
    <property type="component" value="Chromosome 13"/>
</dbReference>
<dbReference type="RNAct" id="Q8BHJ6">
    <property type="molecule type" value="protein"/>
</dbReference>
<dbReference type="Bgee" id="ENSMUSG00000021703">
    <property type="expression patterns" value="Expressed in humerus cartilage element and 244 other cell types or tissues"/>
</dbReference>
<dbReference type="GO" id="GO:0005813">
    <property type="term" value="C:centrosome"/>
    <property type="evidence" value="ECO:0007669"/>
    <property type="project" value="Ensembl"/>
</dbReference>
<dbReference type="GO" id="GO:0005829">
    <property type="term" value="C:cytosol"/>
    <property type="evidence" value="ECO:0007669"/>
    <property type="project" value="Ensembl"/>
</dbReference>
<dbReference type="GO" id="GO:0005794">
    <property type="term" value="C:Golgi apparatus"/>
    <property type="evidence" value="ECO:0000314"/>
    <property type="project" value="MGI"/>
</dbReference>
<dbReference type="GO" id="GO:0043209">
    <property type="term" value="C:myelin sheath"/>
    <property type="evidence" value="ECO:0000314"/>
    <property type="project" value="MGI"/>
</dbReference>
<dbReference type="GO" id="GO:0005886">
    <property type="term" value="C:plasma membrane"/>
    <property type="evidence" value="ECO:0000250"/>
    <property type="project" value="UniProtKB"/>
</dbReference>
<dbReference type="GO" id="GO:0010698">
    <property type="term" value="F:acetyltransferase activator activity"/>
    <property type="evidence" value="ECO:0000250"/>
    <property type="project" value="BHF-UCL"/>
</dbReference>
<dbReference type="GO" id="GO:0017128">
    <property type="term" value="F:phospholipid scramblase activity"/>
    <property type="evidence" value="ECO:0000250"/>
    <property type="project" value="UniProtKB"/>
</dbReference>
<dbReference type="GO" id="GO:0140374">
    <property type="term" value="P:antiviral innate immune response"/>
    <property type="evidence" value="ECO:0000250"/>
    <property type="project" value="UniProtKB"/>
</dbReference>
<dbReference type="GO" id="GO:0042552">
    <property type="term" value="P:myelination"/>
    <property type="evidence" value="ECO:0000314"/>
    <property type="project" value="MGI"/>
</dbReference>
<dbReference type="GO" id="GO:0006658">
    <property type="term" value="P:phosphatidylserine metabolic process"/>
    <property type="evidence" value="ECO:0000250"/>
    <property type="project" value="HGNC-UCL"/>
</dbReference>
<dbReference type="GO" id="GO:0008654">
    <property type="term" value="P:phospholipid biosynthetic process"/>
    <property type="evidence" value="ECO:0007669"/>
    <property type="project" value="UniProtKB-KW"/>
</dbReference>
<dbReference type="GO" id="GO:0017121">
    <property type="term" value="P:plasma membrane phospholipid scrambling"/>
    <property type="evidence" value="ECO:0000250"/>
    <property type="project" value="UniProtKB"/>
</dbReference>
<dbReference type="InterPro" id="IPR005016">
    <property type="entry name" value="TDE1/TMS"/>
</dbReference>
<dbReference type="PANTHER" id="PTHR10383">
    <property type="entry name" value="SERINE INCORPORATOR"/>
    <property type="match status" value="1"/>
</dbReference>
<dbReference type="PANTHER" id="PTHR10383:SF16">
    <property type="entry name" value="SERINE INCORPORATOR 5"/>
    <property type="match status" value="1"/>
</dbReference>
<dbReference type="Pfam" id="PF03348">
    <property type="entry name" value="Serinc"/>
    <property type="match status" value="1"/>
</dbReference>
<feature type="chain" id="PRO_0000330632" description="Serine incorporator 5">
    <location>
        <begin position="1"/>
        <end position="461"/>
    </location>
</feature>
<feature type="topological domain" description="Extracellular" evidence="3">
    <location>
        <begin position="1"/>
        <end position="36"/>
    </location>
</feature>
<feature type="transmembrane region" description="Helical" evidence="3">
    <location>
        <begin position="37"/>
        <end position="57"/>
    </location>
</feature>
<feature type="topological domain" description="Cytoplasmic" evidence="3">
    <location>
        <begin position="58"/>
        <end position="90"/>
    </location>
</feature>
<feature type="transmembrane region" description="Helical" evidence="3">
    <location>
        <begin position="91"/>
        <end position="111"/>
    </location>
</feature>
<feature type="topological domain" description="Extracellular" evidence="3">
    <location>
        <begin position="112"/>
        <end position="125"/>
    </location>
</feature>
<feature type="transmembrane region" description="Helical" evidence="3">
    <location>
        <begin position="126"/>
        <end position="146"/>
    </location>
</feature>
<feature type="topological domain" description="Cytoplasmic" evidence="3">
    <location>
        <begin position="147"/>
        <end position="157"/>
    </location>
</feature>
<feature type="transmembrane region" description="Helical" evidence="3">
    <location>
        <begin position="158"/>
        <end position="178"/>
    </location>
</feature>
<feature type="topological domain" description="Extracellular" evidence="3">
    <location>
        <begin position="179"/>
        <end position="200"/>
    </location>
</feature>
<feature type="transmembrane region" description="Helical" evidence="3">
    <location>
        <begin position="201"/>
        <end position="221"/>
    </location>
</feature>
<feature type="topological domain" description="Cytoplasmic" evidence="3">
    <location>
        <begin position="222"/>
        <end position="231"/>
    </location>
</feature>
<feature type="transmembrane region" description="Helical" evidence="3">
    <location>
        <begin position="232"/>
        <end position="252"/>
    </location>
</feature>
<feature type="topological domain" description="Extracellular" evidence="3">
    <location>
        <begin position="253"/>
        <end position="260"/>
    </location>
</feature>
<feature type="transmembrane region" description="Helical" evidence="3">
    <location>
        <begin position="261"/>
        <end position="281"/>
    </location>
</feature>
<feature type="topological domain" description="Cytoplasmic" evidence="3">
    <location>
        <begin position="282"/>
        <end position="312"/>
    </location>
</feature>
<feature type="transmembrane region" description="Helical" evidence="3">
    <location>
        <begin position="313"/>
        <end position="333"/>
    </location>
</feature>
<feature type="topological domain" description="Extracellular" evidence="3">
    <location>
        <begin position="334"/>
        <end position="392"/>
    </location>
</feature>
<feature type="transmembrane region" description="Helical" evidence="3">
    <location>
        <begin position="393"/>
        <end position="413"/>
    </location>
</feature>
<feature type="topological domain" description="Cytoplasmic" evidence="3">
    <location>
        <begin position="414"/>
        <end position="422"/>
    </location>
</feature>
<feature type="transmembrane region" description="Helical" evidence="3">
    <location>
        <begin position="423"/>
        <end position="443"/>
    </location>
</feature>
<feature type="topological domain" description="Extracellular" evidence="3">
    <location>
        <begin position="444"/>
        <end position="461"/>
    </location>
</feature>
<feature type="glycosylation site" description="N-linked (GlcNAc...) asparagine" evidence="3">
    <location>
        <position position="114"/>
    </location>
</feature>
<feature type="glycosylation site" description="N-linked (GlcNAc...) asparagine" evidence="3">
    <location>
        <position position="184"/>
    </location>
</feature>
<feature type="sequence conflict" description="In Ref. 1; BAC44829." evidence="5" ref="1">
    <original>F</original>
    <variation>S</variation>
    <location>
        <position position="68"/>
    </location>
</feature>
<keyword id="KW-0051">Antiviral defense</keyword>
<keyword id="KW-1003">Cell membrane</keyword>
<keyword id="KW-0325">Glycoprotein</keyword>
<keyword id="KW-0391">Immunity</keyword>
<keyword id="KW-0399">Innate immunity</keyword>
<keyword id="KW-0444">Lipid biosynthesis</keyword>
<keyword id="KW-0443">Lipid metabolism</keyword>
<keyword id="KW-0472">Membrane</keyword>
<keyword id="KW-0594">Phospholipid biosynthesis</keyword>
<keyword id="KW-1208">Phospholipid metabolism</keyword>
<keyword id="KW-1185">Reference proteome</keyword>
<keyword id="KW-0812">Transmembrane</keyword>
<keyword id="KW-1133">Transmembrane helix</keyword>
<protein>
    <recommendedName>
        <fullName>Serine incorporator 5</fullName>
    </recommendedName>
    <alternativeName>
        <fullName evidence="4">Axotomy-induced glycoprotein 3</fullName>
        <shortName evidence="4">AIGP-3</shortName>
    </alternativeName>
</protein>